<keyword id="KW-0030">Aminoacyl-tRNA synthetase</keyword>
<keyword id="KW-0067">ATP-binding</keyword>
<keyword id="KW-0963">Cytoplasm</keyword>
<keyword id="KW-0436">Ligase</keyword>
<keyword id="KW-0547">Nucleotide-binding</keyword>
<keyword id="KW-0648">Protein biosynthesis</keyword>
<dbReference type="EC" id="6.1.1.19" evidence="1"/>
<dbReference type="EMBL" id="CU928164">
    <property type="protein sequence ID" value="CAR17307.1"/>
    <property type="molecule type" value="Genomic_DNA"/>
</dbReference>
<dbReference type="RefSeq" id="WP_001025308.1">
    <property type="nucleotide sequence ID" value="NC_011750.1"/>
</dbReference>
<dbReference type="RefSeq" id="YP_002407181.1">
    <property type="nucleotide sequence ID" value="NC_011750.1"/>
</dbReference>
<dbReference type="SMR" id="B7NS42"/>
<dbReference type="STRING" id="585057.ECIAI39_1173"/>
<dbReference type="KEGG" id="ect:ECIAI39_1173"/>
<dbReference type="PATRIC" id="fig|585057.6.peg.1230"/>
<dbReference type="HOGENOM" id="CLU_006406_5_1_6"/>
<dbReference type="Proteomes" id="UP000000749">
    <property type="component" value="Chromosome"/>
</dbReference>
<dbReference type="GO" id="GO:0005737">
    <property type="term" value="C:cytoplasm"/>
    <property type="evidence" value="ECO:0007669"/>
    <property type="project" value="UniProtKB-SubCell"/>
</dbReference>
<dbReference type="GO" id="GO:0004814">
    <property type="term" value="F:arginine-tRNA ligase activity"/>
    <property type="evidence" value="ECO:0007669"/>
    <property type="project" value="UniProtKB-UniRule"/>
</dbReference>
<dbReference type="GO" id="GO:0005524">
    <property type="term" value="F:ATP binding"/>
    <property type="evidence" value="ECO:0007669"/>
    <property type="project" value="UniProtKB-UniRule"/>
</dbReference>
<dbReference type="GO" id="GO:0006420">
    <property type="term" value="P:arginyl-tRNA aminoacylation"/>
    <property type="evidence" value="ECO:0007669"/>
    <property type="project" value="UniProtKB-UniRule"/>
</dbReference>
<dbReference type="CDD" id="cd07956">
    <property type="entry name" value="Anticodon_Ia_Arg"/>
    <property type="match status" value="1"/>
</dbReference>
<dbReference type="CDD" id="cd00671">
    <property type="entry name" value="ArgRS_core"/>
    <property type="match status" value="1"/>
</dbReference>
<dbReference type="FunFam" id="1.10.730.10:FF:000001">
    <property type="entry name" value="Arginine--tRNA ligase"/>
    <property type="match status" value="1"/>
</dbReference>
<dbReference type="FunFam" id="3.30.1360.70:FF:000001">
    <property type="entry name" value="Arginine--tRNA ligase"/>
    <property type="match status" value="1"/>
</dbReference>
<dbReference type="FunFam" id="3.40.50.620:FF:000030">
    <property type="entry name" value="Arginine--tRNA ligase"/>
    <property type="match status" value="1"/>
</dbReference>
<dbReference type="Gene3D" id="3.30.1360.70">
    <property type="entry name" value="Arginyl tRNA synthetase N-terminal domain"/>
    <property type="match status" value="1"/>
</dbReference>
<dbReference type="Gene3D" id="3.40.50.620">
    <property type="entry name" value="HUPs"/>
    <property type="match status" value="1"/>
</dbReference>
<dbReference type="Gene3D" id="1.10.730.10">
    <property type="entry name" value="Isoleucyl-tRNA Synthetase, Domain 1"/>
    <property type="match status" value="1"/>
</dbReference>
<dbReference type="HAMAP" id="MF_00123">
    <property type="entry name" value="Arg_tRNA_synth"/>
    <property type="match status" value="1"/>
</dbReference>
<dbReference type="InterPro" id="IPR001412">
    <property type="entry name" value="aa-tRNA-synth_I_CS"/>
</dbReference>
<dbReference type="InterPro" id="IPR001278">
    <property type="entry name" value="Arg-tRNA-ligase"/>
</dbReference>
<dbReference type="InterPro" id="IPR005148">
    <property type="entry name" value="Arg-tRNA-synth_N"/>
</dbReference>
<dbReference type="InterPro" id="IPR036695">
    <property type="entry name" value="Arg-tRNA-synth_N_sf"/>
</dbReference>
<dbReference type="InterPro" id="IPR035684">
    <property type="entry name" value="ArgRS_core"/>
</dbReference>
<dbReference type="InterPro" id="IPR008909">
    <property type="entry name" value="DALR_anticod-bd"/>
</dbReference>
<dbReference type="InterPro" id="IPR014729">
    <property type="entry name" value="Rossmann-like_a/b/a_fold"/>
</dbReference>
<dbReference type="InterPro" id="IPR009080">
    <property type="entry name" value="tRNAsynth_Ia_anticodon-bd"/>
</dbReference>
<dbReference type="NCBIfam" id="TIGR00456">
    <property type="entry name" value="argS"/>
    <property type="match status" value="1"/>
</dbReference>
<dbReference type="PANTHER" id="PTHR11956:SF5">
    <property type="entry name" value="ARGININE--TRNA LIGASE, CYTOPLASMIC"/>
    <property type="match status" value="1"/>
</dbReference>
<dbReference type="PANTHER" id="PTHR11956">
    <property type="entry name" value="ARGINYL-TRNA SYNTHETASE"/>
    <property type="match status" value="1"/>
</dbReference>
<dbReference type="Pfam" id="PF03485">
    <property type="entry name" value="Arg_tRNA_synt_N"/>
    <property type="match status" value="1"/>
</dbReference>
<dbReference type="Pfam" id="PF05746">
    <property type="entry name" value="DALR_1"/>
    <property type="match status" value="1"/>
</dbReference>
<dbReference type="Pfam" id="PF00750">
    <property type="entry name" value="tRNA-synt_1d"/>
    <property type="match status" value="1"/>
</dbReference>
<dbReference type="PRINTS" id="PR01038">
    <property type="entry name" value="TRNASYNTHARG"/>
</dbReference>
<dbReference type="SMART" id="SM01016">
    <property type="entry name" value="Arg_tRNA_synt_N"/>
    <property type="match status" value="1"/>
</dbReference>
<dbReference type="SMART" id="SM00836">
    <property type="entry name" value="DALR_1"/>
    <property type="match status" value="1"/>
</dbReference>
<dbReference type="SUPFAM" id="SSF47323">
    <property type="entry name" value="Anticodon-binding domain of a subclass of class I aminoacyl-tRNA synthetases"/>
    <property type="match status" value="1"/>
</dbReference>
<dbReference type="SUPFAM" id="SSF55190">
    <property type="entry name" value="Arginyl-tRNA synthetase (ArgRS), N-terminal 'additional' domain"/>
    <property type="match status" value="1"/>
</dbReference>
<dbReference type="SUPFAM" id="SSF52374">
    <property type="entry name" value="Nucleotidylyl transferase"/>
    <property type="match status" value="1"/>
</dbReference>
<dbReference type="PROSITE" id="PS00178">
    <property type="entry name" value="AA_TRNA_LIGASE_I"/>
    <property type="match status" value="1"/>
</dbReference>
<gene>
    <name evidence="1" type="primary">argS</name>
    <name type="ordered locus">ECIAI39_1173</name>
</gene>
<accession>B7NS42</accession>
<organism>
    <name type="scientific">Escherichia coli O7:K1 (strain IAI39 / ExPEC)</name>
    <dbReference type="NCBI Taxonomy" id="585057"/>
    <lineage>
        <taxon>Bacteria</taxon>
        <taxon>Pseudomonadati</taxon>
        <taxon>Pseudomonadota</taxon>
        <taxon>Gammaproteobacteria</taxon>
        <taxon>Enterobacterales</taxon>
        <taxon>Enterobacteriaceae</taxon>
        <taxon>Escherichia</taxon>
    </lineage>
</organism>
<proteinExistence type="inferred from homology"/>
<sequence length="577" mass="64669">MNIQALLSEKVRQAMIAAGAPADCEPQVRQSAKVQFGDYQANGMMAVAKKLGMAPRQLAEQVLTHLDLNGIASKVEIAGPGFINIFLDPAFLADHVQQALASDRLGVATPEKQTIVVDYSAPNVAKEMHVGHLRSTIIGDAAVRTLEFLGHKVIRANHVGDWGTQFGMLIAWLEKQQQENAGEMELADLEGFYRDAKKHYDEDEEFAERARNYVVKLQSGDEYFREMWRKLVDITMTQNQITYDRLNVTLTRDDVMGESLYNPMLPGIVADLKAKGLAVESEGATVVFLDEFKNKEGEPMGVIIQKKDGGYLYTTTDIACAKYRYETLHADRVLYYIDSRQHQHLMQAWAIVRKAGYVPESVPLEHHMFGMMLGKDGKPFKTRAGGTVKLADLLDEALERARRLVAEKNPDMPADELEKLANAVGIGAVKYADLSKNRTTDYIFDWDNMLAFEGNTAPYMQYAYTRVLSVFRKAEIDEEQLAAAPVIIREDREAQLAARLLQFEETLTVVAREGTPHVMCAYLYDLAGLFSGFYEHCPILSAENEEVRNSRLKLAQLTAKTLKLGLDTLGIETVERM</sequence>
<feature type="chain" id="PRO_1000198906" description="Arginine--tRNA ligase">
    <location>
        <begin position="1"/>
        <end position="577"/>
    </location>
</feature>
<feature type="short sequence motif" description="'HIGH' region">
    <location>
        <begin position="122"/>
        <end position="132"/>
    </location>
</feature>
<evidence type="ECO:0000255" key="1">
    <source>
        <dbReference type="HAMAP-Rule" id="MF_00123"/>
    </source>
</evidence>
<name>SYR_ECO7I</name>
<comment type="catalytic activity">
    <reaction evidence="1">
        <text>tRNA(Arg) + L-arginine + ATP = L-arginyl-tRNA(Arg) + AMP + diphosphate</text>
        <dbReference type="Rhea" id="RHEA:20301"/>
        <dbReference type="Rhea" id="RHEA-COMP:9658"/>
        <dbReference type="Rhea" id="RHEA-COMP:9673"/>
        <dbReference type="ChEBI" id="CHEBI:30616"/>
        <dbReference type="ChEBI" id="CHEBI:32682"/>
        <dbReference type="ChEBI" id="CHEBI:33019"/>
        <dbReference type="ChEBI" id="CHEBI:78442"/>
        <dbReference type="ChEBI" id="CHEBI:78513"/>
        <dbReference type="ChEBI" id="CHEBI:456215"/>
        <dbReference type="EC" id="6.1.1.19"/>
    </reaction>
</comment>
<comment type="subunit">
    <text evidence="1">Monomer.</text>
</comment>
<comment type="subcellular location">
    <subcellularLocation>
        <location evidence="1">Cytoplasm</location>
    </subcellularLocation>
</comment>
<comment type="similarity">
    <text evidence="1">Belongs to the class-I aminoacyl-tRNA synthetase family.</text>
</comment>
<protein>
    <recommendedName>
        <fullName evidence="1">Arginine--tRNA ligase</fullName>
        <ecNumber evidence="1">6.1.1.19</ecNumber>
    </recommendedName>
    <alternativeName>
        <fullName evidence="1">Arginyl-tRNA synthetase</fullName>
        <shortName evidence="1">ArgRS</shortName>
    </alternativeName>
</protein>
<reference key="1">
    <citation type="journal article" date="2009" name="PLoS Genet.">
        <title>Organised genome dynamics in the Escherichia coli species results in highly diverse adaptive paths.</title>
        <authorList>
            <person name="Touchon M."/>
            <person name="Hoede C."/>
            <person name="Tenaillon O."/>
            <person name="Barbe V."/>
            <person name="Baeriswyl S."/>
            <person name="Bidet P."/>
            <person name="Bingen E."/>
            <person name="Bonacorsi S."/>
            <person name="Bouchier C."/>
            <person name="Bouvet O."/>
            <person name="Calteau A."/>
            <person name="Chiapello H."/>
            <person name="Clermont O."/>
            <person name="Cruveiller S."/>
            <person name="Danchin A."/>
            <person name="Diard M."/>
            <person name="Dossat C."/>
            <person name="Karoui M.E."/>
            <person name="Frapy E."/>
            <person name="Garry L."/>
            <person name="Ghigo J.M."/>
            <person name="Gilles A.M."/>
            <person name="Johnson J."/>
            <person name="Le Bouguenec C."/>
            <person name="Lescat M."/>
            <person name="Mangenot S."/>
            <person name="Martinez-Jehanne V."/>
            <person name="Matic I."/>
            <person name="Nassif X."/>
            <person name="Oztas S."/>
            <person name="Petit M.A."/>
            <person name="Pichon C."/>
            <person name="Rouy Z."/>
            <person name="Ruf C.S."/>
            <person name="Schneider D."/>
            <person name="Tourret J."/>
            <person name="Vacherie B."/>
            <person name="Vallenet D."/>
            <person name="Medigue C."/>
            <person name="Rocha E.P.C."/>
            <person name="Denamur E."/>
        </authorList>
    </citation>
    <scope>NUCLEOTIDE SEQUENCE [LARGE SCALE GENOMIC DNA]</scope>
    <source>
        <strain>IAI39 / ExPEC</strain>
    </source>
</reference>